<keyword id="KW-0249">Electron transport</keyword>
<keyword id="KW-0472">Membrane</keyword>
<keyword id="KW-0496">Mitochondrion</keyword>
<keyword id="KW-0999">Mitochondrion inner membrane</keyword>
<keyword id="KW-0520">NAD</keyword>
<keyword id="KW-0679">Respiratory chain</keyword>
<keyword id="KW-1278">Translocase</keyword>
<keyword id="KW-0812">Transmembrane</keyword>
<keyword id="KW-1133">Transmembrane helix</keyword>
<keyword id="KW-0813">Transport</keyword>
<keyword id="KW-0830">Ubiquinone</keyword>
<organism>
    <name type="scientific">Osphranter robustus</name>
    <name type="common">Wallaroo</name>
    <name type="synonym">Macropus robustus</name>
    <dbReference type="NCBI Taxonomy" id="9319"/>
    <lineage>
        <taxon>Eukaryota</taxon>
        <taxon>Metazoa</taxon>
        <taxon>Chordata</taxon>
        <taxon>Craniata</taxon>
        <taxon>Vertebrata</taxon>
        <taxon>Euteleostomi</taxon>
        <taxon>Mammalia</taxon>
        <taxon>Metatheria</taxon>
        <taxon>Diprotodontia</taxon>
        <taxon>Macropodidae</taxon>
        <taxon>Osphranter</taxon>
    </lineage>
</organism>
<sequence>MSPYVFLIISISLFLGTSLTLFSNHWLMAWMGLEINTLAIIPMMTYPNHPRSTEAAIKYFLTQATASMLVMFAIIHNAWMTNQWTLFQMANSAASVLMTLALAMKLGLAPFHFWVPEVTQGIPLSSGMILLTWQKIAPTALLYQISPTLNMKVLITLAFLSTMLGGWGGLNQTHLRKILAYSSIAHMGWMTIVMMINPSLALLNLLIYIIATLTLFLMLNFASVTKIKSLTNLWNKSAPMTTAILLTLLSLGGLPPLTGFMPKWLILQELVSNNNIIMATLMALSALLNLFFYMRIIYASTLTMFPTTNNSKIQWPYPQTKTINIIPTLTIISSLLLPLTPLLTTLMY</sequence>
<gene>
    <name evidence="2" type="primary">MT-ND2</name>
    <name type="synonym">MTND2</name>
    <name type="synonym">NADH2</name>
    <name type="synonym">ND2</name>
</gene>
<evidence type="ECO:0000250" key="1"/>
<evidence type="ECO:0000250" key="2">
    <source>
        <dbReference type="UniProtKB" id="P03891"/>
    </source>
</evidence>
<evidence type="ECO:0000255" key="3"/>
<evidence type="ECO:0000305" key="4"/>
<reference key="1">
    <citation type="journal article" date="1997" name="Proc. Natl. Acad. Sci. U.S.A.">
        <title>The complete mitochondrial genome of the wallaroo (Macropus robustus) and the phylogenetic relationship among Monotremata, Marsupialia, and Eutheria.</title>
        <authorList>
            <person name="Janke A."/>
            <person name="Xu X."/>
            <person name="Arnason U."/>
        </authorList>
    </citation>
    <scope>NUCLEOTIDE SEQUENCE [GENOMIC DNA]</scope>
</reference>
<comment type="function">
    <text evidence="1">Core subunit of the mitochondrial membrane respiratory chain NADH dehydrogenase (Complex I) that is believed to belong to the minimal assembly required for catalysis. Complex I functions in the transfer of electrons from NADH to the respiratory chain. The immediate electron acceptor for the enzyme is believed to be ubiquinone (By similarity).</text>
</comment>
<comment type="catalytic activity">
    <reaction>
        <text>a ubiquinone + NADH + 5 H(+)(in) = a ubiquinol + NAD(+) + 4 H(+)(out)</text>
        <dbReference type="Rhea" id="RHEA:29091"/>
        <dbReference type="Rhea" id="RHEA-COMP:9565"/>
        <dbReference type="Rhea" id="RHEA-COMP:9566"/>
        <dbReference type="ChEBI" id="CHEBI:15378"/>
        <dbReference type="ChEBI" id="CHEBI:16389"/>
        <dbReference type="ChEBI" id="CHEBI:17976"/>
        <dbReference type="ChEBI" id="CHEBI:57540"/>
        <dbReference type="ChEBI" id="CHEBI:57945"/>
        <dbReference type="EC" id="7.1.1.2"/>
    </reaction>
</comment>
<comment type="subunit">
    <text evidence="2">Core subunit of respiratory chain NADH dehydrogenase (Complex I) which is composed of 45 different subunits. Interacts with TMEM242.</text>
</comment>
<comment type="subcellular location">
    <subcellularLocation>
        <location>Mitochondrion inner membrane</location>
        <topology>Multi-pass membrane protein</topology>
    </subcellularLocation>
</comment>
<comment type="similarity">
    <text evidence="4">Belongs to the complex I subunit 2 family.</text>
</comment>
<protein>
    <recommendedName>
        <fullName evidence="2">NADH-ubiquinone oxidoreductase chain 2</fullName>
        <ecNumber>7.1.1.2</ecNumber>
    </recommendedName>
    <alternativeName>
        <fullName>NADH dehydrogenase subunit 2</fullName>
    </alternativeName>
</protein>
<proteinExistence type="inferred from homology"/>
<accession>P92660</accession>
<dbReference type="EC" id="7.1.1.2"/>
<dbReference type="EMBL" id="Y10524">
    <property type="protein sequence ID" value="CAA71537.1"/>
    <property type="molecule type" value="Genomic_DNA"/>
</dbReference>
<dbReference type="PIR" id="T11429">
    <property type="entry name" value="T11429"/>
</dbReference>
<dbReference type="RefSeq" id="NP_007395.1">
    <property type="nucleotide sequence ID" value="NC_001794.1"/>
</dbReference>
<dbReference type="SMR" id="P92660"/>
<dbReference type="GeneID" id="808071"/>
<dbReference type="CTD" id="4536"/>
<dbReference type="GO" id="GO:0005743">
    <property type="term" value="C:mitochondrial inner membrane"/>
    <property type="evidence" value="ECO:0007669"/>
    <property type="project" value="UniProtKB-SubCell"/>
</dbReference>
<dbReference type="GO" id="GO:0008137">
    <property type="term" value="F:NADH dehydrogenase (ubiquinone) activity"/>
    <property type="evidence" value="ECO:0007669"/>
    <property type="project" value="UniProtKB-EC"/>
</dbReference>
<dbReference type="GO" id="GO:0006120">
    <property type="term" value="P:mitochondrial electron transport, NADH to ubiquinone"/>
    <property type="evidence" value="ECO:0007669"/>
    <property type="project" value="InterPro"/>
</dbReference>
<dbReference type="InterPro" id="IPR050175">
    <property type="entry name" value="Complex_I_Subunit_2"/>
</dbReference>
<dbReference type="InterPro" id="IPR010933">
    <property type="entry name" value="NADH_DH_su2_C"/>
</dbReference>
<dbReference type="InterPro" id="IPR003917">
    <property type="entry name" value="NADH_UbQ_OxRdtase_chain2"/>
</dbReference>
<dbReference type="InterPro" id="IPR001750">
    <property type="entry name" value="ND/Mrp_TM"/>
</dbReference>
<dbReference type="PANTHER" id="PTHR46552">
    <property type="entry name" value="NADH-UBIQUINONE OXIDOREDUCTASE CHAIN 2"/>
    <property type="match status" value="1"/>
</dbReference>
<dbReference type="PANTHER" id="PTHR46552:SF1">
    <property type="entry name" value="NADH-UBIQUINONE OXIDOREDUCTASE CHAIN 2"/>
    <property type="match status" value="1"/>
</dbReference>
<dbReference type="Pfam" id="PF06444">
    <property type="entry name" value="NADH_dehy_S2_C"/>
    <property type="match status" value="1"/>
</dbReference>
<dbReference type="Pfam" id="PF00361">
    <property type="entry name" value="Proton_antipo_M"/>
    <property type="match status" value="1"/>
</dbReference>
<dbReference type="PRINTS" id="PR01436">
    <property type="entry name" value="NADHDHGNASE2"/>
</dbReference>
<feature type="chain" id="PRO_0000117604" description="NADH-ubiquinone oxidoreductase chain 2">
    <location>
        <begin position="1"/>
        <end position="348"/>
    </location>
</feature>
<feature type="transmembrane region" description="Helical" evidence="3">
    <location>
        <begin position="2"/>
        <end position="22"/>
    </location>
</feature>
<feature type="transmembrane region" description="Helical" evidence="3">
    <location>
        <begin position="26"/>
        <end position="46"/>
    </location>
</feature>
<feature type="transmembrane region" description="Helical" evidence="3">
    <location>
        <begin position="55"/>
        <end position="75"/>
    </location>
</feature>
<feature type="transmembrane region" description="Helical" evidence="3">
    <location>
        <begin position="96"/>
        <end position="116"/>
    </location>
</feature>
<feature type="transmembrane region" description="Helical" evidence="3">
    <location>
        <begin position="149"/>
        <end position="169"/>
    </location>
</feature>
<feature type="transmembrane region" description="Helical" evidence="3">
    <location>
        <begin position="178"/>
        <end position="198"/>
    </location>
</feature>
<feature type="transmembrane region" description="Helical" evidence="3">
    <location>
        <begin position="199"/>
        <end position="219"/>
    </location>
</feature>
<feature type="transmembrane region" description="Helical" evidence="3">
    <location>
        <begin position="242"/>
        <end position="262"/>
    </location>
</feature>
<feature type="transmembrane region" description="Helical" evidence="3">
    <location>
        <begin position="276"/>
        <end position="296"/>
    </location>
</feature>
<feature type="transmembrane region" description="Helical" evidence="3">
    <location>
        <begin position="323"/>
        <end position="343"/>
    </location>
</feature>
<geneLocation type="mitochondrion"/>
<name>NU2M_OSPRO</name>